<sequence>MSASSTSSSSTSCPEGGEPSGSCKSSDEGESTLKKRMQQYGIASGYANSSISTLDRSQYQSLPLNGTRRVTVQFGRMKIVVPWKESDQTVGQLADAALLRYKKARGMANEDRIHVHRLECASDGGILDMDDVLEEVFDLNYDQILAITDEANGGSTTPTYSQIQKQQHHYAQPLPYARKFDGGPSTPIASAFGSVTVNHQAHRAASPYNVGFARSNSRDFAPQPTHSKERRDSVVEVSSFDQIPQSGLRVSTPKPSRQSEDVIDGKPMNQPILRSSLRTEASGSRTEEATPVKQSRVTLSPEVEKKLAEQDERKSERRKHYDKNPGRFARGSDRKSRITDALLDARDRIADQLESQNPAEETKSQMIRVKIDQGPMPGTSLVTFPPIPEKSENEKQLGIEVNAVFDESSELPGTSEPTKLSSVQIMKIEDGGRIAKDGRIRVGDCIVAIDGKPVDQMSIIRVRASISDLAAVTSRPVTLIINRSLESFLEQESSAKPIQSALQQANTQYIGHTTVVELIKSSNGFGFTVTGRETAKGERLFYIGTVKPYGVALGHLKSGDRLLEINGTPTGQWTQSEIVEKLKETMVGEKIKFLVSRVSQSAIMSTSASSENKENEETLKVVEEEKIPQKLPLPALMTPPVPKDTPALSPSGASRFEIVIPFINGSSSAGLGVSLKARVSKKSNGSKVDCGIFIKNVMHGGAAFKEGGLRVDDRIVGVEDIDLEPLDNREAQAALAKKLKEVGMISSNVRLTISRYNECNPGQISRDLSRITVDASSPSPSSRMSSHTAPDSLLPSPATRGTSSSGADSSHSRQSSASSAVPAVPARLTERDSIVSDGTSRNDESELPDSADPFNREGLGRKSLSEKRGMGAAADPQHIKLFQDIKHQRQNSAPTSSTQKRSKSQPRSSSQRNYRSPMKLVDLPTTAAASASTNSQNLDDSDMLNRRSQSMESINRPVESILRGTGQIPTGSSSKVQFMQAASPDQHPFPPGAALLRLKNEESRSRDKSRRKSMGNPFSAMRNFFGFGSKSRDASPEKTPTESVQLRSVERPKSIIDERNNGSSERAPPPLPPHQSQRRGSGGNVFVDYGEPYGLIPQYPHNTTSGYESYADSELYDRYAAHRYHPRGGPIIDEDEYIYRQQSTSGNSPINTSSYVNYGLPASNAYHVGSRIPPQTSSGSISKTSGAMRRVYPAEYDEDVAYHQQIPQQSTRYQQGSGSGRGNADYHHMFNSWFAYTGGGAVGAAPVIKSSYGSSPVRIAAASAIERGESFVVEPVSGSSASATDRRGRSTSSGAVASGSSSTGFQYAAKEKYADARSGKFNGGSTRLFIPRHGGGLSAAAFATNFGGEAYETRGGGAGGSPSQYRRRDQGPPHRFPQY</sequence>
<keyword id="KW-0025">Alternative splicing</keyword>
<keyword id="KW-0130">Cell adhesion</keyword>
<keyword id="KW-0131">Cell cycle</keyword>
<keyword id="KW-0132">Cell division</keyword>
<keyword id="KW-0175">Coiled coil</keyword>
<keyword id="KW-0963">Cytoplasm</keyword>
<keyword id="KW-0217">Developmental protein</keyword>
<keyword id="KW-0221">Differentiation</keyword>
<keyword id="KW-0278">Fertilization</keyword>
<keyword id="KW-0306">Gastrulation</keyword>
<keyword id="KW-0334">Gonadal differentiation</keyword>
<keyword id="KW-1185">Reference proteome</keyword>
<keyword id="KW-0677">Repeat</keyword>
<dbReference type="EMBL" id="U25032">
    <property type="protein sequence ID" value="AAB18670.1"/>
    <property type="molecule type" value="mRNA"/>
</dbReference>
<dbReference type="EMBL" id="FO080172">
    <property type="protein sequence ID" value="CCD61764.1"/>
    <property type="molecule type" value="Genomic_DNA"/>
</dbReference>
<dbReference type="EMBL" id="FO080172">
    <property type="protein sequence ID" value="CCD61765.1"/>
    <property type="molecule type" value="Genomic_DNA"/>
</dbReference>
<dbReference type="EMBL" id="FO080172">
    <property type="protein sequence ID" value="CCD61766.1"/>
    <property type="molecule type" value="Genomic_DNA"/>
</dbReference>
<dbReference type="RefSeq" id="NP_001022607.1">
    <molecule id="Q17353-1"/>
    <property type="nucleotide sequence ID" value="NM_001027436.3"/>
</dbReference>
<dbReference type="RefSeq" id="NP_001040857.1">
    <property type="nucleotide sequence ID" value="NM_001047392.1"/>
</dbReference>
<dbReference type="RefSeq" id="NP_001379567.1">
    <molecule id="Q17353-2"/>
    <property type="nucleotide sequence ID" value="NM_001392103.1"/>
</dbReference>
<dbReference type="RefSeq" id="NP_001379568.1">
    <molecule id="Q17353-3"/>
    <property type="nucleotide sequence ID" value="NM_001392104.1"/>
</dbReference>
<dbReference type="RefSeq" id="NP_498217.2">
    <property type="nucleotide sequence ID" value="NM_065816.6"/>
</dbReference>
<dbReference type="SMR" id="Q17353"/>
<dbReference type="BioGRID" id="41010">
    <property type="interactions" value="62"/>
</dbReference>
<dbReference type="DIP" id="DIP-25317N"/>
<dbReference type="FunCoup" id="Q17353">
    <property type="interactions" value="912"/>
</dbReference>
<dbReference type="IntAct" id="Q17353">
    <property type="interactions" value="55"/>
</dbReference>
<dbReference type="STRING" id="6239.F54E7.3i.1"/>
<dbReference type="iPTMnet" id="Q17353"/>
<dbReference type="PaxDb" id="6239-F54E7.3i"/>
<dbReference type="PeptideAtlas" id="Q17353"/>
<dbReference type="EnsemblMetazoa" id="F54E7.3a.1">
    <molecule id="Q17353-2"/>
    <property type="protein sequence ID" value="F54E7.3a.1"/>
    <property type="gene ID" value="WBGene00003918"/>
</dbReference>
<dbReference type="EnsemblMetazoa" id="F54E7.3b.1">
    <molecule id="Q17353-1"/>
    <property type="protein sequence ID" value="F54E7.3b.1"/>
    <property type="gene ID" value="WBGene00003918"/>
</dbReference>
<dbReference type="EnsemblMetazoa" id="F54E7.3b.2">
    <molecule id="Q17353-1"/>
    <property type="protein sequence ID" value="F54E7.3b.2"/>
    <property type="gene ID" value="WBGene00003918"/>
</dbReference>
<dbReference type="EnsemblMetazoa" id="F54E7.3b.3">
    <molecule id="Q17353-1"/>
    <property type="protein sequence ID" value="F54E7.3b.3"/>
    <property type="gene ID" value="WBGene00003918"/>
</dbReference>
<dbReference type="EnsemblMetazoa" id="F54E7.3c.1">
    <molecule id="Q17353-3"/>
    <property type="protein sequence ID" value="F54E7.3c.1"/>
    <property type="gene ID" value="WBGene00003918"/>
</dbReference>
<dbReference type="EnsemblMetazoa" id="F54E7.3c.2">
    <molecule id="Q17353-3"/>
    <property type="protein sequence ID" value="F54E7.3c.2"/>
    <property type="gene ID" value="WBGene00003918"/>
</dbReference>
<dbReference type="GeneID" id="175783"/>
<dbReference type="KEGG" id="cel:CELE_F54E7.3"/>
<dbReference type="UCSC" id="F54E7.3b">
    <property type="organism name" value="c. elegans"/>
</dbReference>
<dbReference type="AGR" id="WB:WBGene00003918"/>
<dbReference type="CTD" id="175783"/>
<dbReference type="WormBase" id="F54E7.3a">
    <molecule id="Q17353-2"/>
    <property type="protein sequence ID" value="CE28449"/>
    <property type="gene ID" value="WBGene00003918"/>
    <property type="gene designation" value="par-3"/>
</dbReference>
<dbReference type="WormBase" id="F54E7.3b">
    <molecule id="Q17353-1"/>
    <property type="protein sequence ID" value="CE28450"/>
    <property type="gene ID" value="WBGene00003918"/>
    <property type="gene designation" value="par-3"/>
</dbReference>
<dbReference type="WormBase" id="F54E7.3c">
    <molecule id="Q17353-3"/>
    <property type="protein sequence ID" value="CE39941"/>
    <property type="gene ID" value="WBGene00003918"/>
    <property type="gene designation" value="par-3"/>
</dbReference>
<dbReference type="eggNOG" id="KOG3528">
    <property type="taxonomic scope" value="Eukaryota"/>
</dbReference>
<dbReference type="InParanoid" id="Q17353"/>
<dbReference type="OrthoDB" id="6264899at2759"/>
<dbReference type="PhylomeDB" id="Q17353"/>
<dbReference type="Reactome" id="R-CEL-2173791">
    <property type="pathway name" value="TGF-beta receptor signaling in EMT (epithelial to mesenchymal transition)"/>
</dbReference>
<dbReference type="SignaLink" id="Q17353"/>
<dbReference type="CD-CODE" id="1E117272">
    <property type="entry name" value="Centrosome"/>
</dbReference>
<dbReference type="PRO" id="PR:Q17353"/>
<dbReference type="Proteomes" id="UP000001940">
    <property type="component" value="Chromosome III"/>
</dbReference>
<dbReference type="Bgee" id="WBGene00003918">
    <property type="expression patterns" value="Expressed in pharyngeal muscle cell (C elegans) and 4 other cell types or tissues"/>
</dbReference>
<dbReference type="ExpressionAtlas" id="Q17353">
    <property type="expression patterns" value="baseline and differential"/>
</dbReference>
<dbReference type="GO" id="GO:0005912">
    <property type="term" value="C:adherens junction"/>
    <property type="evidence" value="ECO:0000318"/>
    <property type="project" value="GO_Central"/>
</dbReference>
<dbReference type="GO" id="GO:0061802">
    <property type="term" value="C:anterior cell cortex"/>
    <property type="evidence" value="ECO:0000314"/>
    <property type="project" value="UniProtKB"/>
</dbReference>
<dbReference type="GO" id="GO:0045179">
    <property type="term" value="C:apical cortex"/>
    <property type="evidence" value="ECO:0000314"/>
    <property type="project" value="WormBase"/>
</dbReference>
<dbReference type="GO" id="GO:0043296">
    <property type="term" value="C:apical junction complex"/>
    <property type="evidence" value="ECO:0000318"/>
    <property type="project" value="GO_Central"/>
</dbReference>
<dbReference type="GO" id="GO:0045177">
    <property type="term" value="C:apical part of cell"/>
    <property type="evidence" value="ECO:0000314"/>
    <property type="project" value="WormBase"/>
</dbReference>
<dbReference type="GO" id="GO:0016324">
    <property type="term" value="C:apical plasma membrane"/>
    <property type="evidence" value="ECO:0000318"/>
    <property type="project" value="GO_Central"/>
</dbReference>
<dbReference type="GO" id="GO:0045178">
    <property type="term" value="C:basal part of cell"/>
    <property type="evidence" value="ECO:0000314"/>
    <property type="project" value="WormBase"/>
</dbReference>
<dbReference type="GO" id="GO:0005938">
    <property type="term" value="C:cell cortex"/>
    <property type="evidence" value="ECO:0000314"/>
    <property type="project" value="UniProtKB"/>
</dbReference>
<dbReference type="GO" id="GO:0005737">
    <property type="term" value="C:cytoplasm"/>
    <property type="evidence" value="ECO:0000314"/>
    <property type="project" value="UniProtKB"/>
</dbReference>
<dbReference type="GO" id="GO:0031234">
    <property type="term" value="C:extrinsic component of cytoplasmic side of plasma membrane"/>
    <property type="evidence" value="ECO:0000314"/>
    <property type="project" value="GO_Central"/>
</dbReference>
<dbReference type="GO" id="GO:0016020">
    <property type="term" value="C:membrane"/>
    <property type="evidence" value="ECO:0000314"/>
    <property type="project" value="UniProtKB"/>
</dbReference>
<dbReference type="GO" id="GO:0043186">
    <property type="term" value="C:P granule"/>
    <property type="evidence" value="ECO:0000314"/>
    <property type="project" value="UniProtKB"/>
</dbReference>
<dbReference type="GO" id="GO:0035091">
    <property type="term" value="F:phosphatidylinositol binding"/>
    <property type="evidence" value="ECO:0000318"/>
    <property type="project" value="GO_Central"/>
</dbReference>
<dbReference type="GO" id="GO:0008356">
    <property type="term" value="P:asymmetric cell division"/>
    <property type="evidence" value="ECO:0000315"/>
    <property type="project" value="WormBase"/>
</dbReference>
<dbReference type="GO" id="GO:0007155">
    <property type="term" value="P:cell adhesion"/>
    <property type="evidence" value="ECO:0000315"/>
    <property type="project" value="UniProtKB"/>
</dbReference>
<dbReference type="GO" id="GO:0030154">
    <property type="term" value="P:cell differentiation"/>
    <property type="evidence" value="ECO:0007669"/>
    <property type="project" value="UniProtKB-KW"/>
</dbReference>
<dbReference type="GO" id="GO:0030010">
    <property type="term" value="P:establishment of cell polarity"/>
    <property type="evidence" value="ECO:0000315"/>
    <property type="project" value="WormBase"/>
</dbReference>
<dbReference type="GO" id="GO:0051660">
    <property type="term" value="P:establishment of centrosome localization"/>
    <property type="evidence" value="ECO:0000318"/>
    <property type="project" value="GO_Central"/>
</dbReference>
<dbReference type="GO" id="GO:0040001">
    <property type="term" value="P:establishment of mitotic spindle localization"/>
    <property type="evidence" value="ECO:0000316"/>
    <property type="project" value="UniProtKB"/>
</dbReference>
<dbReference type="GO" id="GO:0000132">
    <property type="term" value="P:establishment of mitotic spindle orientation"/>
    <property type="evidence" value="ECO:0000315"/>
    <property type="project" value="WormBase"/>
</dbReference>
<dbReference type="GO" id="GO:0007163">
    <property type="term" value="P:establishment or maintenance of cell polarity"/>
    <property type="evidence" value="ECO:0000316"/>
    <property type="project" value="UniProtKB"/>
</dbReference>
<dbReference type="GO" id="GO:0045197">
    <property type="term" value="P:establishment or maintenance of epithelial cell apical/basal polarity"/>
    <property type="evidence" value="ECO:0000318"/>
    <property type="project" value="GO_Central"/>
</dbReference>
<dbReference type="GO" id="GO:0007369">
    <property type="term" value="P:gastrulation"/>
    <property type="evidence" value="ECO:0000315"/>
    <property type="project" value="UniProtKB"/>
</dbReference>
<dbReference type="GO" id="GO:0008406">
    <property type="term" value="P:gonad development"/>
    <property type="evidence" value="ECO:0000315"/>
    <property type="project" value="UniProtKB"/>
</dbReference>
<dbReference type="GO" id="GO:0007506">
    <property type="term" value="P:gonadal mesoderm development"/>
    <property type="evidence" value="ECO:0007669"/>
    <property type="project" value="UniProtKB-KW"/>
</dbReference>
<dbReference type="GO" id="GO:0000226">
    <property type="term" value="P:microtubule cytoskeleton organization"/>
    <property type="evidence" value="ECO:0000318"/>
    <property type="project" value="GO_Central"/>
</dbReference>
<dbReference type="GO" id="GO:0009949">
    <property type="term" value="P:polarity specification of anterior/posterior axis"/>
    <property type="evidence" value="ECO:0000315"/>
    <property type="project" value="WormBase"/>
</dbReference>
<dbReference type="GO" id="GO:0008104">
    <property type="term" value="P:protein localization"/>
    <property type="evidence" value="ECO:0000315"/>
    <property type="project" value="UniProtKB"/>
</dbReference>
<dbReference type="GO" id="GO:0007338">
    <property type="term" value="P:single fertilization"/>
    <property type="evidence" value="ECO:0007669"/>
    <property type="project" value="UniProtKB-KW"/>
</dbReference>
<dbReference type="CDD" id="cd23059">
    <property type="entry name" value="PDZ3_Par3-like"/>
    <property type="match status" value="1"/>
</dbReference>
<dbReference type="CDD" id="cd00136">
    <property type="entry name" value="PDZ_canonical"/>
    <property type="match status" value="1"/>
</dbReference>
<dbReference type="FunFam" id="2.30.42.10:FF:000272">
    <property type="entry name" value="Partitioning defective protein 3"/>
    <property type="match status" value="1"/>
</dbReference>
<dbReference type="FunFam" id="2.30.42.10:FF:000290">
    <property type="entry name" value="Partitioning defective protein 3"/>
    <property type="match status" value="1"/>
</dbReference>
<dbReference type="FunFam" id="2.30.42.10:FF:000291">
    <property type="entry name" value="Partitioning defective protein 3"/>
    <property type="match status" value="1"/>
</dbReference>
<dbReference type="Gene3D" id="2.30.42.10">
    <property type="match status" value="3"/>
</dbReference>
<dbReference type="Gene3D" id="3.10.20.90">
    <property type="entry name" value="Phosphatidylinositol 3-kinase Catalytic Subunit, Chain A, domain 1"/>
    <property type="match status" value="1"/>
</dbReference>
<dbReference type="InterPro" id="IPR052213">
    <property type="entry name" value="PAR3"/>
</dbReference>
<dbReference type="InterPro" id="IPR021922">
    <property type="entry name" value="Par3/HAL_N"/>
</dbReference>
<dbReference type="InterPro" id="IPR001478">
    <property type="entry name" value="PDZ"/>
</dbReference>
<dbReference type="InterPro" id="IPR036034">
    <property type="entry name" value="PDZ_sf"/>
</dbReference>
<dbReference type="PANTHER" id="PTHR16484:SF17">
    <property type="entry name" value="BAZOOKA, ISOFORM B"/>
    <property type="match status" value="1"/>
</dbReference>
<dbReference type="PANTHER" id="PTHR16484">
    <property type="entry name" value="PARTITIONING DEFECTIVE 3 RELATED"/>
    <property type="match status" value="1"/>
</dbReference>
<dbReference type="Pfam" id="PF12053">
    <property type="entry name" value="Par3_HAL_N_term"/>
    <property type="match status" value="1"/>
</dbReference>
<dbReference type="Pfam" id="PF00595">
    <property type="entry name" value="PDZ"/>
    <property type="match status" value="3"/>
</dbReference>
<dbReference type="SMART" id="SM00228">
    <property type="entry name" value="PDZ"/>
    <property type="match status" value="3"/>
</dbReference>
<dbReference type="SUPFAM" id="SSF50156">
    <property type="entry name" value="PDZ domain-like"/>
    <property type="match status" value="3"/>
</dbReference>
<dbReference type="PROSITE" id="PS50106">
    <property type="entry name" value="PDZ"/>
    <property type="match status" value="3"/>
</dbReference>
<gene>
    <name evidence="13" type="primary">par-3</name>
    <name type="ORF">F54E7.3</name>
</gene>
<evidence type="ECO:0000255" key="1"/>
<evidence type="ECO:0000255" key="2">
    <source>
        <dbReference type="PROSITE-ProRule" id="PRU00143"/>
    </source>
</evidence>
<evidence type="ECO:0000256" key="3">
    <source>
        <dbReference type="SAM" id="MobiDB-lite"/>
    </source>
</evidence>
<evidence type="ECO:0000269" key="4">
    <source>
    </source>
</evidence>
<evidence type="ECO:0000269" key="5">
    <source>
    </source>
</evidence>
<evidence type="ECO:0000269" key="6">
    <source>
    </source>
</evidence>
<evidence type="ECO:0000269" key="7">
    <source>
    </source>
</evidence>
<evidence type="ECO:0000269" key="8">
    <source>
    </source>
</evidence>
<evidence type="ECO:0000269" key="9">
    <source>
    </source>
</evidence>
<evidence type="ECO:0000269" key="10">
    <source>
    </source>
</evidence>
<evidence type="ECO:0000269" key="11">
    <source>
    </source>
</evidence>
<evidence type="ECO:0000305" key="12"/>
<evidence type="ECO:0000312" key="13">
    <source>
        <dbReference type="EMBL" id="AAB18670.1"/>
    </source>
</evidence>
<name>PAR3_CAEEL</name>
<proteinExistence type="evidence at protein level"/>
<comment type="function">
    <text evidence="4 5 6 7 8 9 10 11">In cooperation with pkc-3, required for establishing cell polarity and regulating spindle orientation in the early embryo (PubMed:8521491, PubMed:9716526). Localization is crucial for recruiting par-6 and pkc-3 to the peripheral apical cortex and restricting par-2 to basolateral surfaces (PubMed:8898226, PubMed:9834192). Necessary for apicobasal and anterior-posterior asymmetries associated with cell adhesion and gastrulation during the first few cycles of embryogenesis, and also for epithelial cell polarity in the distal spermatheca (PubMed:13129846, PubMed:15151982). Regulates the asymmetric localization of csnk-1, ppk-1 and gpr-1/2 during the first embryonic division (PubMed:14534135, PubMed:18694560).</text>
</comment>
<comment type="subunit">
    <text evidence="9 10 11">Required, together with pkc-3, for the localization of par-6; par-6 is involved in localizing/maintaining par-3 at the cell periphery. Interacts with par-6 and pkc-3 for localization at the periphery of anterior cortex of the embryo.</text>
</comment>
<comment type="interaction">
    <interactant intactId="EBI-321762">
        <id>Q17353</id>
    </interactant>
    <interactant intactId="EBI-319158">
        <id>Q19266</id>
        <label>pkc-3</label>
    </interactant>
    <organismsDiffer>false</organismsDiffer>
    <experiments>3</experiments>
</comment>
<comment type="interaction">
    <interactant intactId="EBI-11467668">
        <id>Q17353-2</id>
    </interactant>
    <interactant intactId="EBI-316282">
        <id>Q09248</id>
        <label>dnc-2</label>
    </interactant>
    <organismsDiffer>false</organismsDiffer>
    <experiments>3</experiments>
</comment>
<comment type="interaction">
    <interactant intactId="EBI-1812329">
        <id>Q17353-3</id>
    </interactant>
    <interactant intactId="EBI-328492">
        <id>O16502</id>
        <label>abu-7</label>
    </interactant>
    <organismsDiffer>false</organismsDiffer>
    <experiments>2</experiments>
</comment>
<comment type="interaction">
    <interactant intactId="EBI-1812329">
        <id>Q17353-3</id>
    </interactant>
    <interactant intactId="EBI-2413872">
        <id>H2L055</id>
        <label>CELE_F53A10.2</label>
    </interactant>
    <organismsDiffer>false</organismsDiffer>
    <experiments>2</experiments>
</comment>
<comment type="interaction">
    <interactant intactId="EBI-1812329">
        <id>Q17353-3</id>
    </interactant>
    <interactant intactId="EBI-320525">
        <id>Q22387</id>
        <label>CELE_T11B7.1</label>
    </interactant>
    <organismsDiffer>false</organismsDiffer>
    <experiments>3</experiments>
</comment>
<comment type="subcellular location">
    <subcellularLocation>
        <location evidence="8">Cytoplasm</location>
    </subcellularLocation>
    <text>Cytoplasmic and cell periphery.</text>
</comment>
<comment type="alternative products">
    <event type="alternative splicing"/>
    <isoform>
        <id>Q17353-1</id>
        <name evidence="8">b</name>
        <sequence type="displayed"/>
    </isoform>
    <isoform>
        <id>Q17353-2</id>
        <name>a</name>
        <sequence type="described" ref="VSP_051597"/>
    </isoform>
    <isoform>
        <id>Q17353-3</id>
        <name>c</name>
        <sequence type="described" ref="VSP_034689 VSP_051597"/>
    </isoform>
</comment>
<comment type="tissue specificity">
    <text evidence="4 6 8 11">Asymmetrically distributed at the periphery of the zygote and in dividing blastomeres of the germline lineage. Coexpressed with par-6; patchy expression observed at the periphery after completion of meiosis I and in meiosis II. On completion of metaphase II, expression is restricted to the anterior 85% of embryo length; this decreases to 55% in embryos between prophase and telophase of the first mitosis. During the first cleavage, expression is detected in the advancing furrow. Transiently coexpressed and colocalized asymmetrically with par-6 and pkc-3, in the developing somatic gonad, including the spermathecal precursor cells of L4 larvae.</text>
</comment>
<comment type="developmental stage">
    <text evidence="8">Expressed both maternally and zygotically.</text>
</comment>
<comment type="similarity">
    <text evidence="8">Belongs to the PAR3 family.</text>
</comment>
<organism>
    <name type="scientific">Caenorhabditis elegans</name>
    <dbReference type="NCBI Taxonomy" id="6239"/>
    <lineage>
        <taxon>Eukaryota</taxon>
        <taxon>Metazoa</taxon>
        <taxon>Ecdysozoa</taxon>
        <taxon>Nematoda</taxon>
        <taxon>Chromadorea</taxon>
        <taxon>Rhabditida</taxon>
        <taxon>Rhabditina</taxon>
        <taxon>Rhabditomorpha</taxon>
        <taxon>Rhabditoidea</taxon>
        <taxon>Rhabditidae</taxon>
        <taxon>Peloderinae</taxon>
        <taxon>Caenorhabditis</taxon>
    </lineage>
</organism>
<feature type="chain" id="PRO_0000185074" description="Partitioning defective protein 3">
    <location>
        <begin position="1"/>
        <end position="1379"/>
    </location>
</feature>
<feature type="domain" description="PDZ 1" evidence="2">
    <location>
        <begin position="381"/>
        <end position="483"/>
    </location>
</feature>
<feature type="domain" description="PDZ 2" evidence="2">
    <location>
        <begin position="515"/>
        <end position="599"/>
    </location>
</feature>
<feature type="domain" description="PDZ 3" evidence="2">
    <location>
        <begin position="659"/>
        <end position="750"/>
    </location>
</feature>
<feature type="region of interest" description="Disordered" evidence="3">
    <location>
        <begin position="1"/>
        <end position="32"/>
    </location>
</feature>
<feature type="region of interest" description="Disordered" evidence="3">
    <location>
        <begin position="208"/>
        <end position="335"/>
    </location>
</feature>
<feature type="region of interest" description="Disordered" evidence="3">
    <location>
        <begin position="767"/>
        <end position="873"/>
    </location>
</feature>
<feature type="region of interest" description="Disordered" evidence="3">
    <location>
        <begin position="887"/>
        <end position="918"/>
    </location>
</feature>
<feature type="region of interest" description="Disordered" evidence="3">
    <location>
        <begin position="949"/>
        <end position="1085"/>
    </location>
</feature>
<feature type="region of interest" description="Disordered" evidence="3">
    <location>
        <begin position="1273"/>
        <end position="1301"/>
    </location>
</feature>
<feature type="region of interest" description="Disordered" evidence="3">
    <location>
        <begin position="1350"/>
        <end position="1379"/>
    </location>
</feature>
<feature type="coiled-coil region" evidence="1">
    <location>
        <begin position="606"/>
        <end position="626"/>
    </location>
</feature>
<feature type="compositionally biased region" description="Low complexity" evidence="3">
    <location>
        <begin position="1"/>
        <end position="23"/>
    </location>
</feature>
<feature type="compositionally biased region" description="Polar residues" evidence="3">
    <location>
        <begin position="239"/>
        <end position="256"/>
    </location>
</feature>
<feature type="compositionally biased region" description="Polar residues" evidence="3">
    <location>
        <begin position="272"/>
        <end position="284"/>
    </location>
</feature>
<feature type="compositionally biased region" description="Basic and acidic residues" evidence="3">
    <location>
        <begin position="302"/>
        <end position="315"/>
    </location>
</feature>
<feature type="compositionally biased region" description="Basic and acidic residues" evidence="3">
    <location>
        <begin position="322"/>
        <end position="335"/>
    </location>
</feature>
<feature type="compositionally biased region" description="Low complexity" evidence="3">
    <location>
        <begin position="776"/>
        <end position="786"/>
    </location>
</feature>
<feature type="compositionally biased region" description="Low complexity" evidence="3">
    <location>
        <begin position="798"/>
        <end position="826"/>
    </location>
</feature>
<feature type="compositionally biased region" description="Basic and acidic residues" evidence="3">
    <location>
        <begin position="828"/>
        <end position="844"/>
    </location>
</feature>
<feature type="compositionally biased region" description="Basic and acidic residues" evidence="3">
    <location>
        <begin position="854"/>
        <end position="869"/>
    </location>
</feature>
<feature type="compositionally biased region" description="Low complexity" evidence="3">
    <location>
        <begin position="894"/>
        <end position="912"/>
    </location>
</feature>
<feature type="compositionally biased region" description="Polar residues" evidence="3">
    <location>
        <begin position="967"/>
        <end position="977"/>
    </location>
</feature>
<feature type="compositionally biased region" description="Basic and acidic residues" evidence="3">
    <location>
        <begin position="1030"/>
        <end position="1040"/>
    </location>
</feature>
<feature type="compositionally biased region" description="Basic and acidic residues" evidence="3">
    <location>
        <begin position="1048"/>
        <end position="1060"/>
    </location>
</feature>
<feature type="compositionally biased region" description="Low complexity" evidence="3">
    <location>
        <begin position="1290"/>
        <end position="1301"/>
    </location>
</feature>
<feature type="splice variant" id="VSP_034689" description="In isoform c." evidence="12">
    <original>MSASSTSSSSTSCPEGGEPSGSCKSSDEGESTLKKRMQQYGIASGYANSSISTLDRSQYQSLPLNGTRRVTVQFGRMKIVVPWKESDQTVGQLADAALLRYKKARGM</original>
    <variation>MHNGRGGRYDVCPPPPPPPYHFNHVHTPPSKVIVQQQKQQQKAHREPPPSYPASKMTTTNDNVTVSKRNFQ</variation>
    <location>
        <begin position="1"/>
        <end position="107"/>
    </location>
</feature>
<feature type="splice variant" id="VSP_051597" description="In isoform a and isoform c." evidence="12">
    <location>
        <begin position="1017"/>
        <end position="1019"/>
    </location>
</feature>
<reference evidence="12 13" key="1">
    <citation type="journal article" date="1995" name="Cell">
        <title>Asymmetrically distributed PAR-3 protein contributes to cell polarity and spindle alignment in early C. elegans embryos.</title>
        <authorList>
            <person name="Etemad-Moghadam B."/>
            <person name="Guo S."/>
            <person name="Kemphues K.J."/>
        </authorList>
    </citation>
    <scope>NUCLEOTIDE SEQUENCE [MRNA] (ISOFORM B)</scope>
    <scope>FUNCTION</scope>
    <scope>SUBCELLULAR LOCATION</scope>
    <scope>TISSUE SPECIFICITY</scope>
    <scope>DEVELOPMENTAL STAGE</scope>
    <source>
        <strain evidence="8">Bristol N2</strain>
        <tissue evidence="8">Embryo</tissue>
    </source>
</reference>
<reference key="2">
    <citation type="journal article" date="1998" name="Science">
        <title>Genome sequence of the nematode C. elegans: a platform for investigating biology.</title>
        <authorList>
            <consortium name="The C. elegans sequencing consortium"/>
        </authorList>
    </citation>
    <scope>NUCLEOTIDE SEQUENCE [LARGE SCALE GENOMIC DNA]</scope>
    <scope>ALTERNATIVE SPLICING</scope>
    <source>
        <strain>Bristol N2</strain>
    </source>
</reference>
<reference evidence="12" key="3">
    <citation type="journal article" date="1996" name="Development">
        <title>par-6, a gene involved in the establishment of asymmetry in early C. elegans embryos, mediates the asymmetric localization of PAR-3.</title>
        <authorList>
            <person name="Watts J.L."/>
            <person name="Etemad-Moghadam B."/>
            <person name="Guo S."/>
            <person name="Boyd L."/>
            <person name="Draper B.W."/>
            <person name="Mello C.C."/>
            <person name="Priess J.R."/>
            <person name="Kemphues K.J."/>
        </authorList>
    </citation>
    <scope>FUNCTION</scope>
    <scope>INTERACTION WITH PAR-6</scope>
    <source>
        <strain evidence="9">Bristol N2</strain>
    </source>
</reference>
<reference evidence="12" key="4">
    <citation type="journal article" date="1998" name="Development">
        <title>Atypical protein kinase C cooperates with PAR-3 to establish embryonic polarity in Caenorhabditis elegans.</title>
        <authorList>
            <person name="Tabuse Y."/>
            <person name="Izumi Y."/>
            <person name="Piano F."/>
            <person name="Kemphues K.J."/>
            <person name="Miwa J."/>
            <person name="Ohno S."/>
        </authorList>
    </citation>
    <scope>FUNCTION</scope>
    <scope>INTERACTION WITH PKC-3</scope>
</reference>
<reference evidence="12" key="5">
    <citation type="journal article" date="1999" name="Development">
        <title>PAR-6 is a conserved PDZ domain-containing protein that colocalizes with PAR-3 in Caenorhabditis elegans embryos.</title>
        <authorList>
            <person name="Hung T.-J."/>
            <person name="Kemphues K.J."/>
        </authorList>
    </citation>
    <scope>FUNCTION</scope>
    <scope>INTERACTION WITH PAR-6 AND PKC-3</scope>
    <scope>TISSUE SPECIFICITY</scope>
    <source>
        <strain evidence="11">Bristol N2</strain>
    </source>
</reference>
<reference evidence="12" key="6">
    <citation type="journal article" date="2003" name="Development">
        <title>C. elegans PAR-3 and PAR-6 are required for apicobasal asymmetries associated with cell adhesion and gastrulation.</title>
        <authorList>
            <person name="Nance J."/>
            <person name="Munro E.M."/>
            <person name="Priess J.R."/>
        </authorList>
    </citation>
    <scope>FUNCTION</scope>
    <scope>TISSUE SPECIFICITY</scope>
</reference>
<reference key="7">
    <citation type="journal article" date="2003" name="Development">
        <title>LET-99 opposes Galpha/GPR signaling to generate asymmetry for spindle positioning in response to PAR and MES-1/SRC-1 signaling.</title>
        <authorList>
            <person name="Tsou M.-F.B."/>
            <person name="Hayashi A."/>
            <person name="Rose L.S."/>
        </authorList>
    </citation>
    <scope>FUNCTION</scope>
</reference>
<reference key="8">
    <citation type="journal article" date="2004" name="Development">
        <title>PAR-3 is required for epithelial cell polarity in the distal spermatheca of C. elegans.</title>
        <authorList>
            <person name="Aono S."/>
            <person name="Legouis R."/>
            <person name="Hoose W.A."/>
            <person name="Kemphues K.J."/>
        </authorList>
    </citation>
    <scope>FUNCTION</scope>
    <scope>TISSUE SPECIFICITY</scope>
</reference>
<reference key="9">
    <citation type="journal article" date="2008" name="Dev. Cell">
        <title>A casein kinase 1 and PAR proteins regulate asymmetry of a PIP(2) synthesis enzyme for asymmetric spindle positioning.</title>
        <authorList>
            <person name="Panbianco C."/>
            <person name="Weinkove D."/>
            <person name="Zanin E."/>
            <person name="Jones D."/>
            <person name="Divecha N."/>
            <person name="Gotta M."/>
            <person name="Ahringer J."/>
        </authorList>
    </citation>
    <scope>FUNCTION</scope>
</reference>
<protein>
    <recommendedName>
        <fullName>Partitioning defective protein 3</fullName>
    </recommendedName>
    <alternativeName>
        <fullName>Abnormal embryonic partitioning of cytoplasm protein 3</fullName>
    </alternativeName>
</protein>
<accession>Q17353</accession>
<accession>Q27GV0</accession>
<accession>Q95QE9</accession>